<gene>
    <name evidence="1" type="primary">hslV</name>
    <name type="synonym">htpO</name>
    <name type="synonym">yiiC</name>
    <name type="ordered locus">b3932</name>
    <name type="ordered locus">JW3903</name>
</gene>
<protein>
    <recommendedName>
        <fullName evidence="1">ATP-dependent protease subunit HslV</fullName>
        <ecNumber evidence="1">3.4.25.2</ecNumber>
    </recommendedName>
    <alternativeName>
        <fullName evidence="1">Heat shock protein HslV</fullName>
    </alternativeName>
</protein>
<evidence type="ECO:0000255" key="1">
    <source>
        <dbReference type="HAMAP-Rule" id="MF_00248"/>
    </source>
</evidence>
<evidence type="ECO:0000269" key="2">
    <source>
    </source>
</evidence>
<evidence type="ECO:0000269" key="3">
    <source>
    </source>
</evidence>
<evidence type="ECO:0000269" key="4">
    <source>
    </source>
</evidence>
<evidence type="ECO:0000269" key="5">
    <source>
    </source>
</evidence>
<evidence type="ECO:0000269" key="6">
    <source>
    </source>
</evidence>
<evidence type="ECO:0000269" key="7">
    <source>
    </source>
</evidence>
<evidence type="ECO:0000269" key="8">
    <source>
    </source>
</evidence>
<evidence type="ECO:0000269" key="9">
    <source>
    </source>
</evidence>
<evidence type="ECO:0000269" key="10">
    <source>
    </source>
</evidence>
<evidence type="ECO:0000269" key="11">
    <source>
    </source>
</evidence>
<evidence type="ECO:0000269" key="12">
    <source>
    </source>
</evidence>
<evidence type="ECO:0000305" key="13"/>
<evidence type="ECO:0007829" key="14">
    <source>
        <dbReference type="PDB" id="1E94"/>
    </source>
</evidence>
<evidence type="ECO:0007829" key="15">
    <source>
        <dbReference type="PDB" id="1G4A"/>
    </source>
</evidence>
<name>HSLV_ECOLI</name>
<organism>
    <name type="scientific">Escherichia coli (strain K12)</name>
    <dbReference type="NCBI Taxonomy" id="83333"/>
    <lineage>
        <taxon>Bacteria</taxon>
        <taxon>Pseudomonadati</taxon>
        <taxon>Pseudomonadota</taxon>
        <taxon>Gammaproteobacteria</taxon>
        <taxon>Enterobacterales</taxon>
        <taxon>Enterobacteriaceae</taxon>
        <taxon>Escherichia</taxon>
    </lineage>
</organism>
<keyword id="KW-0002">3D-structure</keyword>
<keyword id="KW-0021">Allosteric enzyme</keyword>
<keyword id="KW-0963">Cytoplasm</keyword>
<keyword id="KW-0903">Direct protein sequencing</keyword>
<keyword id="KW-0378">Hydrolase</keyword>
<keyword id="KW-0479">Metal-binding</keyword>
<keyword id="KW-0645">Protease</keyword>
<keyword id="KW-1185">Reference proteome</keyword>
<keyword id="KW-0915">Sodium</keyword>
<keyword id="KW-0346">Stress response</keyword>
<keyword id="KW-0888">Threonine protease</keyword>
<dbReference type="EC" id="3.4.25.2" evidence="1"/>
<dbReference type="EMBL" id="L19201">
    <property type="protein sequence ID" value="AAB03064.1"/>
    <property type="molecule type" value="Genomic_DNA"/>
</dbReference>
<dbReference type="EMBL" id="U00096">
    <property type="protein sequence ID" value="AAC76914.1"/>
    <property type="molecule type" value="Genomic_DNA"/>
</dbReference>
<dbReference type="EMBL" id="AP009048">
    <property type="protein sequence ID" value="BAE77378.1"/>
    <property type="molecule type" value="Genomic_DNA"/>
</dbReference>
<dbReference type="EMBL" id="D89965">
    <property type="protein sequence ID" value="BAA14040.1"/>
    <property type="status" value="ALT_SEQ"/>
    <property type="molecule type" value="mRNA"/>
</dbReference>
<dbReference type="EMBL" id="L14281">
    <property type="status" value="NOT_ANNOTATED_CDS"/>
    <property type="molecule type" value="Genomic_DNA"/>
</dbReference>
<dbReference type="PIR" id="JT0760">
    <property type="entry name" value="JT0760"/>
</dbReference>
<dbReference type="RefSeq" id="NP_418367.1">
    <property type="nucleotide sequence ID" value="NC_000913.3"/>
</dbReference>
<dbReference type="RefSeq" id="WP_000208242.1">
    <property type="nucleotide sequence ID" value="NZ_STEB01000017.1"/>
</dbReference>
<dbReference type="PDB" id="1E94">
    <property type="method" value="X-ray"/>
    <property type="resolution" value="2.80 A"/>
    <property type="chains" value="A/B/C/D=2-176"/>
</dbReference>
<dbReference type="PDB" id="1G4A">
    <property type="method" value="X-ray"/>
    <property type="resolution" value="3.00 A"/>
    <property type="chains" value="A/B/C/D=2-176"/>
</dbReference>
<dbReference type="PDB" id="1G4B">
    <property type="method" value="X-ray"/>
    <property type="resolution" value="7.00 A"/>
    <property type="chains" value="M/N/O/P=2-176"/>
</dbReference>
<dbReference type="PDB" id="1HQY">
    <property type="method" value="X-ray"/>
    <property type="resolution" value="2.80 A"/>
    <property type="chains" value="A/B/C/D=2-176"/>
</dbReference>
<dbReference type="PDB" id="1HT1">
    <property type="method" value="X-ray"/>
    <property type="resolution" value="2.80 A"/>
    <property type="chains" value="A/B/C/D/V/X/Y/Z=2-176"/>
</dbReference>
<dbReference type="PDB" id="1HT2">
    <property type="method" value="X-ray"/>
    <property type="resolution" value="2.80 A"/>
    <property type="chains" value="A/B/C/D/I/J/K/L=2-176"/>
</dbReference>
<dbReference type="PDB" id="1NED">
    <property type="method" value="X-ray"/>
    <property type="resolution" value="3.80 A"/>
    <property type="chains" value="A/B/C=2-176"/>
</dbReference>
<dbReference type="PDB" id="4G4E">
    <property type="method" value="X-ray"/>
    <property type="resolution" value="2.89 A"/>
    <property type="chains" value="A/B/C/D/E/F/G/H/I/J/K/L=2-175"/>
</dbReference>
<dbReference type="PDB" id="5JI3">
    <property type="method" value="X-ray"/>
    <property type="resolution" value="3.00 A"/>
    <property type="chains" value="A/B/C/D=1-176"/>
</dbReference>
<dbReference type="PDB" id="6PXI">
    <property type="method" value="X-ray"/>
    <property type="resolution" value="3.45 A"/>
    <property type="chains" value="A/B/C/D=2-175"/>
</dbReference>
<dbReference type="PDBsum" id="1E94"/>
<dbReference type="PDBsum" id="1G4A"/>
<dbReference type="PDBsum" id="1G4B"/>
<dbReference type="PDBsum" id="1HQY"/>
<dbReference type="PDBsum" id="1HT1"/>
<dbReference type="PDBsum" id="1HT2"/>
<dbReference type="PDBsum" id="1NED"/>
<dbReference type="PDBsum" id="4G4E"/>
<dbReference type="PDBsum" id="5JI3"/>
<dbReference type="PDBsum" id="6PXI"/>
<dbReference type="SMR" id="P0A7B8"/>
<dbReference type="BioGRID" id="4261781">
    <property type="interactions" value="294"/>
</dbReference>
<dbReference type="ComplexPortal" id="CPX-2104">
    <property type="entry name" value="HslUV protease complex"/>
</dbReference>
<dbReference type="DIP" id="DIP-35866N"/>
<dbReference type="FunCoup" id="P0A7B8">
    <property type="interactions" value="517"/>
</dbReference>
<dbReference type="IntAct" id="P0A7B8">
    <property type="interactions" value="33"/>
</dbReference>
<dbReference type="STRING" id="511145.b3932"/>
<dbReference type="MEROPS" id="T01.006"/>
<dbReference type="jPOST" id="P0A7B8"/>
<dbReference type="PaxDb" id="511145-b3932"/>
<dbReference type="EnsemblBacteria" id="AAC76914">
    <property type="protein sequence ID" value="AAC76914"/>
    <property type="gene ID" value="b3932"/>
</dbReference>
<dbReference type="GeneID" id="93777966"/>
<dbReference type="GeneID" id="948429"/>
<dbReference type="KEGG" id="ecj:JW3903"/>
<dbReference type="KEGG" id="eco:b3932"/>
<dbReference type="KEGG" id="ecoc:C3026_21250"/>
<dbReference type="PATRIC" id="fig|1411691.4.peg.2773"/>
<dbReference type="EchoBASE" id="EB1627"/>
<dbReference type="eggNOG" id="COG5405">
    <property type="taxonomic scope" value="Bacteria"/>
</dbReference>
<dbReference type="HOGENOM" id="CLU_093872_1_0_6"/>
<dbReference type="InParanoid" id="P0A7B8"/>
<dbReference type="OMA" id="WRTDKML"/>
<dbReference type="OrthoDB" id="9804884at2"/>
<dbReference type="PhylomeDB" id="P0A7B8"/>
<dbReference type="BioCyc" id="EcoCyc:EG11676-MONOMER"/>
<dbReference type="BioCyc" id="MetaCyc:EG11676-MONOMER"/>
<dbReference type="BRENDA" id="3.4.25.2">
    <property type="organism ID" value="2026"/>
</dbReference>
<dbReference type="CD-CODE" id="3A3AD14F">
    <property type="entry name" value="Aggresome"/>
</dbReference>
<dbReference type="EvolutionaryTrace" id="P0A7B8"/>
<dbReference type="PRO" id="PR:P0A7B8"/>
<dbReference type="Proteomes" id="UP000000625">
    <property type="component" value="Chromosome"/>
</dbReference>
<dbReference type="GO" id="GO:0005737">
    <property type="term" value="C:cytoplasm"/>
    <property type="evidence" value="ECO:0000318"/>
    <property type="project" value="GO_Central"/>
</dbReference>
<dbReference type="GO" id="GO:0005829">
    <property type="term" value="C:cytosol"/>
    <property type="evidence" value="ECO:0000314"/>
    <property type="project" value="EcoCyc"/>
</dbReference>
<dbReference type="GO" id="GO:0009376">
    <property type="term" value="C:HslUV protease complex"/>
    <property type="evidence" value="ECO:0000314"/>
    <property type="project" value="CAFA"/>
</dbReference>
<dbReference type="GO" id="GO:0005839">
    <property type="term" value="C:proteasome core complex"/>
    <property type="evidence" value="ECO:0007669"/>
    <property type="project" value="InterPro"/>
</dbReference>
<dbReference type="GO" id="GO:0005524">
    <property type="term" value="F:ATP binding"/>
    <property type="evidence" value="ECO:0000314"/>
    <property type="project" value="CAFA"/>
</dbReference>
<dbReference type="GO" id="GO:0042802">
    <property type="term" value="F:identical protein binding"/>
    <property type="evidence" value="ECO:0000353"/>
    <property type="project" value="IntAct"/>
</dbReference>
<dbReference type="GO" id="GO:0000287">
    <property type="term" value="F:magnesium ion binding"/>
    <property type="evidence" value="ECO:0000314"/>
    <property type="project" value="CAFA"/>
</dbReference>
<dbReference type="GO" id="GO:0019904">
    <property type="term" value="F:protein domain specific binding"/>
    <property type="evidence" value="ECO:0000353"/>
    <property type="project" value="CAFA"/>
</dbReference>
<dbReference type="GO" id="GO:0004298">
    <property type="term" value="F:threonine-type endopeptidase activity"/>
    <property type="evidence" value="ECO:0000315"/>
    <property type="project" value="EcoCyc"/>
</dbReference>
<dbReference type="GO" id="GO:0034605">
    <property type="term" value="P:cellular response to heat"/>
    <property type="evidence" value="ECO:0000303"/>
    <property type="project" value="ComplexPortal"/>
</dbReference>
<dbReference type="GO" id="GO:0030164">
    <property type="term" value="P:protein denaturation"/>
    <property type="evidence" value="ECO:0000314"/>
    <property type="project" value="ComplexPortal"/>
</dbReference>
<dbReference type="GO" id="GO:0006508">
    <property type="term" value="P:proteolysis"/>
    <property type="evidence" value="ECO:0000314"/>
    <property type="project" value="CAFA"/>
</dbReference>
<dbReference type="GO" id="GO:0051603">
    <property type="term" value="P:proteolysis involved in protein catabolic process"/>
    <property type="evidence" value="ECO:0000315"/>
    <property type="project" value="EcoCyc"/>
</dbReference>
<dbReference type="GO" id="GO:0009408">
    <property type="term" value="P:response to heat"/>
    <property type="evidence" value="ECO:0000270"/>
    <property type="project" value="EcoliWiki"/>
</dbReference>
<dbReference type="CDD" id="cd01913">
    <property type="entry name" value="protease_HslV"/>
    <property type="match status" value="1"/>
</dbReference>
<dbReference type="FunFam" id="3.60.20.10:FF:000002">
    <property type="entry name" value="ATP-dependent protease subunit HslV"/>
    <property type="match status" value="1"/>
</dbReference>
<dbReference type="Gene3D" id="3.60.20.10">
    <property type="entry name" value="Glutamine Phosphoribosylpyrophosphate, subunit 1, domain 1"/>
    <property type="match status" value="1"/>
</dbReference>
<dbReference type="HAMAP" id="MF_00248">
    <property type="entry name" value="HslV"/>
    <property type="match status" value="1"/>
</dbReference>
<dbReference type="InterPro" id="IPR022281">
    <property type="entry name" value="ATP-dep_Prtase_HsIV_su"/>
</dbReference>
<dbReference type="InterPro" id="IPR029055">
    <property type="entry name" value="Ntn_hydrolases_N"/>
</dbReference>
<dbReference type="InterPro" id="IPR001353">
    <property type="entry name" value="Proteasome_sua/b"/>
</dbReference>
<dbReference type="InterPro" id="IPR023333">
    <property type="entry name" value="Proteasome_suB-type"/>
</dbReference>
<dbReference type="NCBIfam" id="TIGR03692">
    <property type="entry name" value="ATP_dep_HslV"/>
    <property type="match status" value="1"/>
</dbReference>
<dbReference type="NCBIfam" id="NF003964">
    <property type="entry name" value="PRK05456.1"/>
    <property type="match status" value="1"/>
</dbReference>
<dbReference type="PANTHER" id="PTHR32194:SF0">
    <property type="entry name" value="ATP-DEPENDENT PROTEASE SUBUNIT HSLV"/>
    <property type="match status" value="1"/>
</dbReference>
<dbReference type="PANTHER" id="PTHR32194">
    <property type="entry name" value="METALLOPROTEASE TLDD"/>
    <property type="match status" value="1"/>
</dbReference>
<dbReference type="Pfam" id="PF00227">
    <property type="entry name" value="Proteasome"/>
    <property type="match status" value="1"/>
</dbReference>
<dbReference type="PIRSF" id="PIRSF039093">
    <property type="entry name" value="HslV"/>
    <property type="match status" value="1"/>
</dbReference>
<dbReference type="SUPFAM" id="SSF56235">
    <property type="entry name" value="N-terminal nucleophile aminohydrolases (Ntn hydrolases)"/>
    <property type="match status" value="1"/>
</dbReference>
<dbReference type="PROSITE" id="PS51476">
    <property type="entry name" value="PROTEASOME_BETA_2"/>
    <property type="match status" value="1"/>
</dbReference>
<feature type="initiator methionine" description="Removed">
    <location>
        <position position="1"/>
    </location>
</feature>
<feature type="chain" id="PRO_0000148105" description="ATP-dependent protease subunit HslV">
    <location>
        <begin position="2"/>
        <end position="176"/>
    </location>
</feature>
<feature type="active site" evidence="1 9">
    <location>
        <position position="2"/>
    </location>
</feature>
<feature type="binding site">
    <location>
        <position position="157"/>
    </location>
    <ligand>
        <name>Na(+)</name>
        <dbReference type="ChEBI" id="CHEBI:29101"/>
    </ligand>
</feature>
<feature type="binding site">
    <location>
        <position position="160"/>
    </location>
    <ligand>
        <name>Na(+)</name>
        <dbReference type="ChEBI" id="CHEBI:29101"/>
    </ligand>
</feature>
<feature type="binding site">
    <location>
        <position position="163"/>
    </location>
    <ligand>
        <name>Na(+)</name>
        <dbReference type="ChEBI" id="CHEBI:29101"/>
    </ligand>
</feature>
<feature type="mutagenesis site" description="80% reduced protease activity in the absence of HslU. Almost no effect in the presence of HslU." evidence="9">
    <original>T</original>
    <variation>S</variation>
    <location>
        <position position="2"/>
    </location>
</feature>
<feature type="mutagenesis site" description="No protease activity." evidence="9">
    <original>T</original>
    <variation>V</variation>
    <location>
        <position position="2"/>
    </location>
</feature>
<feature type="mutagenesis site" description="80% reduced protease activity." evidence="9">
    <original>T</original>
    <variation>S</variation>
    <variation>V</variation>
    <location>
        <position position="3"/>
    </location>
</feature>
<feature type="mutagenesis site" description="No effect." evidence="9">
    <original>S</original>
    <variation>A</variation>
    <location>
        <position position="6"/>
    </location>
</feature>
<feature type="mutagenesis site" description="50% reduced protease activity." evidence="9">
    <original>S</original>
    <variation>A</variation>
    <location>
        <position position="104"/>
    </location>
</feature>
<feature type="mutagenesis site" description="Almost no protease activity." evidence="9">
    <original>S</original>
    <variation>A</variation>
    <location>
        <position position="125"/>
    </location>
</feature>
<feature type="mutagenesis site" description="No effect." evidence="9">
    <original>S</original>
    <variation>A</variation>
    <location>
        <position position="144"/>
    </location>
</feature>
<feature type="mutagenesis site" description="No protease activity. Cannot form complexes with HslU." evidence="12">
    <original>C</original>
    <variation>A</variation>
    <variation>S</variation>
    <location>
        <position position="160"/>
    </location>
</feature>
<feature type="mutagenesis site" description="Almost no protease activity." evidence="9">
    <original>S</original>
    <variation>A</variation>
    <location>
        <position position="173"/>
    </location>
</feature>
<feature type="strand" evidence="14">
    <location>
        <begin position="3"/>
        <end position="8"/>
    </location>
</feature>
<feature type="strand" evidence="14">
    <location>
        <begin position="10"/>
        <end position="17"/>
    </location>
</feature>
<feature type="strand" evidence="14">
    <location>
        <begin position="21"/>
        <end position="23"/>
    </location>
</feature>
<feature type="strand" evidence="14">
    <location>
        <begin position="26"/>
        <end position="30"/>
    </location>
</feature>
<feature type="strand" evidence="14">
    <location>
        <begin position="35"/>
        <end position="38"/>
    </location>
</feature>
<feature type="turn" evidence="14">
    <location>
        <begin position="39"/>
        <end position="42"/>
    </location>
</feature>
<feature type="strand" evidence="14">
    <location>
        <begin position="43"/>
        <end position="49"/>
    </location>
</feature>
<feature type="helix" evidence="14">
    <location>
        <begin position="51"/>
        <end position="66"/>
    </location>
</feature>
<feature type="turn" evidence="14">
    <location>
        <begin position="67"/>
        <end position="70"/>
    </location>
</feature>
<feature type="helix" evidence="14">
    <location>
        <begin position="72"/>
        <end position="85"/>
    </location>
</feature>
<feature type="helix" evidence="14">
    <location>
        <begin position="89"/>
        <end position="91"/>
    </location>
</feature>
<feature type="strand" evidence="14">
    <location>
        <begin position="94"/>
        <end position="99"/>
    </location>
</feature>
<feature type="strand" evidence="14">
    <location>
        <begin position="104"/>
        <end position="108"/>
    </location>
</feature>
<feature type="turn" evidence="14">
    <location>
        <begin position="109"/>
        <end position="111"/>
    </location>
</feature>
<feature type="strand" evidence="14">
    <location>
        <begin position="112"/>
        <end position="114"/>
    </location>
</feature>
<feature type="turn" evidence="15">
    <location>
        <begin position="117"/>
        <end position="119"/>
    </location>
</feature>
<feature type="strand" evidence="14">
    <location>
        <begin position="121"/>
        <end position="124"/>
    </location>
</feature>
<feature type="helix" evidence="14">
    <location>
        <begin position="127"/>
        <end position="138"/>
    </location>
</feature>
<feature type="helix" evidence="14">
    <location>
        <begin position="145"/>
        <end position="159"/>
    </location>
</feature>
<feature type="strand" evidence="14">
    <location>
        <begin position="168"/>
        <end position="173"/>
    </location>
</feature>
<comment type="function">
    <text evidence="1 2 3 4 6 7 10 11">Protease subunit of a proteasome-like degradation complex believed to be a general protein degrading machinery. The complex has been shown to be involved in the specific degradation of heat shock induced transcription factors such as RpoH and SulA. In addition, small hydrophobic peptides are also hydrolyzed by HslV. HslV has weak protease activity even in the absence of HslU, but this activity is induced more than 100-fold in the presence of HslU. HslU recognizes protein substrates and unfolds these before guiding them to HslV for hydrolysis. HslV is not believed to degrade folded proteins.</text>
</comment>
<comment type="catalytic activity">
    <reaction evidence="1 2 3 6 10 11">
        <text>ATP-dependent cleavage of peptide bonds with broad specificity.</text>
        <dbReference type="EC" id="3.4.25.2"/>
    </reaction>
</comment>
<comment type="activity regulation">
    <text evidence="13">Allosterically activated by HslU binding.</text>
</comment>
<comment type="biophysicochemical properties">
    <kinetics>
        <KM evidence="4">5.2 uM for Arc-MYL-st11 (at 37 degrees Celsius)</KM>
        <text>Arc is a repressor protein, Arc-MYL-st11 is a hyperstable variant of Arc.</text>
    </kinetics>
    <temperatureDependence>
        <text evidence="4">Optimum temperature is 55 degrees Celsius.</text>
    </temperatureDependence>
</comment>
<comment type="subunit">
    <text evidence="1 8">A double ring-shaped homohexamer of HslV is capped on each side by a ring-shaped HslU homohexamer. The assembly of the HslU/HslV complex is dependent on binding of ATP.</text>
</comment>
<comment type="interaction">
    <interactant intactId="EBI-552265">
        <id>P0A7B8</id>
    </interactant>
    <interactant intactId="EBI-369317">
        <id>P0A6H5</id>
        <label>hslU</label>
    </interactant>
    <organismsDiffer>false</organismsDiffer>
    <experiments>16</experiments>
</comment>
<comment type="interaction">
    <interactant intactId="EBI-552265">
        <id>P0A7B8</id>
    </interactant>
    <interactant intactId="EBI-552265">
        <id>P0A7B8</id>
        <label>hslV</label>
    </interactant>
    <organismsDiffer>false</organismsDiffer>
    <experiments>6</experiments>
</comment>
<comment type="subcellular location">
    <subcellularLocation>
        <location>Cytoplasm</location>
    </subcellularLocation>
</comment>
<comment type="induction">
    <text evidence="1 5">By heat shock.</text>
</comment>
<comment type="similarity">
    <text evidence="1">Belongs to the peptidase T1B family. HslV subfamily.</text>
</comment>
<comment type="caution">
    <text evidence="13">PubMed:9013898 sequence is supposed to originate from rat but, based on sequence similarity, it seems that this is a case of bacterial contamination from E.coli.</text>
</comment>
<proteinExistence type="evidence at protein level"/>
<accession>P0A7B8</accession>
<accession>P31059</accession>
<accession>P97542</accession>
<accession>Q2M8M8</accession>
<reference key="1">
    <citation type="journal article" date="1993" name="Gene">
        <title>Sequence analysis of four new heat-shock genes constituting the hslTS/ibpAB and hslVU operons in Escherichia coli.</title>
        <authorList>
            <person name="Chuang S.E."/>
            <person name="Burland V."/>
            <person name="Plunkett G. III"/>
            <person name="Daniels D.L."/>
            <person name="Blattner F.R."/>
        </authorList>
    </citation>
    <scope>NUCLEOTIDE SEQUENCE [GENOMIC DNA]</scope>
    <scope>INDUCTION</scope>
    <source>
        <strain>K12 / MG1655 / ATCC 47076</strain>
    </source>
</reference>
<reference key="2">
    <citation type="journal article" date="1993" name="Nucleic Acids Res.">
        <title>Analysis of the Escherichia coli genome. III. DNA sequence of the region from 87.2 to 89.2 minutes.</title>
        <authorList>
            <person name="Plunkett G. III"/>
            <person name="Burland V."/>
            <person name="Daniels D.L."/>
            <person name="Blattner F.R."/>
        </authorList>
    </citation>
    <scope>NUCLEOTIDE SEQUENCE [LARGE SCALE GENOMIC DNA]</scope>
    <source>
        <strain>K12 / MG1655 / ATCC 47076</strain>
    </source>
</reference>
<reference key="3">
    <citation type="journal article" date="1997" name="Science">
        <title>The complete genome sequence of Escherichia coli K-12.</title>
        <authorList>
            <person name="Blattner F.R."/>
            <person name="Plunkett G. III"/>
            <person name="Bloch C.A."/>
            <person name="Perna N.T."/>
            <person name="Burland V."/>
            <person name="Riley M."/>
            <person name="Collado-Vides J."/>
            <person name="Glasner J.D."/>
            <person name="Rode C.K."/>
            <person name="Mayhew G.F."/>
            <person name="Gregor J."/>
            <person name="Davis N.W."/>
            <person name="Kirkpatrick H.A."/>
            <person name="Goeden M.A."/>
            <person name="Rose D.J."/>
            <person name="Mau B."/>
            <person name="Shao Y."/>
        </authorList>
    </citation>
    <scope>NUCLEOTIDE SEQUENCE [LARGE SCALE GENOMIC DNA]</scope>
    <source>
        <strain>K12 / MG1655 / ATCC 47076</strain>
    </source>
</reference>
<reference key="4">
    <citation type="journal article" date="2006" name="Mol. Syst. Biol.">
        <title>Highly accurate genome sequences of Escherichia coli K-12 strains MG1655 and W3110.</title>
        <authorList>
            <person name="Hayashi K."/>
            <person name="Morooka N."/>
            <person name="Yamamoto Y."/>
            <person name="Fujita K."/>
            <person name="Isono K."/>
            <person name="Choi S."/>
            <person name="Ohtsubo E."/>
            <person name="Baba T."/>
            <person name="Wanner B.L."/>
            <person name="Mori H."/>
            <person name="Horiuchi T."/>
        </authorList>
    </citation>
    <scope>NUCLEOTIDE SEQUENCE [LARGE SCALE GENOMIC DNA]</scope>
    <source>
        <strain>K12 / W3110 / ATCC 27325 / DSM 5911</strain>
    </source>
</reference>
<reference key="5">
    <citation type="journal article" date="1997" name="FEBS Lett.">
        <title>Molecular cloning of a novel gene involved in serotonin receptor-mediated signal transduction in rat stomach.</title>
        <authorList>
            <person name="Ohya S."/>
            <person name="Takii T."/>
            <person name="Yamazaki H."/>
            <person name="Matsumori M."/>
            <person name="Onozaki K."/>
            <person name="Watanabe M."/>
            <person name="Imaizumi Y."/>
        </authorList>
    </citation>
    <scope>NUCLEOTIDE SEQUENCE [GENOMIC DNA] OF 1-125</scope>
</reference>
<reference key="6">
    <citation type="submission" date="1993-04" db="EMBL/GenBank/DDBJ databases">
        <authorList>
            <person name="Dai K."/>
            <person name="Xu Y."/>
            <person name="Lutkenhaus J."/>
        </authorList>
    </citation>
    <scope>NUCLEOTIDE SEQUENCE [GENOMIC DNA] OF 1-88</scope>
</reference>
<reference key="7">
    <citation type="journal article" date="1996" name="J. Biol. Chem.">
        <title>Purification and characterization of the heat shock proteins HslV and HslU that form a new ATP-dependent protease in Escherichia coli.</title>
        <authorList>
            <person name="Yoo S.J."/>
            <person name="Seol J.H."/>
            <person name="Shin D.H."/>
            <person name="Rohrwild M."/>
            <person name="Kang M.-S."/>
            <person name="Tanaka K."/>
            <person name="Goldberg A.L."/>
            <person name="Chung C.H."/>
        </authorList>
    </citation>
    <scope>FUNCTION</scope>
    <scope>SUBSTRATE SPECIFICITY</scope>
</reference>
<reference key="8">
    <citation type="journal article" date="1996" name="Proc. Natl. Acad. Sci. U.S.A.">
        <title>HslV-HslU: A novel ATP-dependent protease complex in Escherichia coli related to the eukaryotic proteasome.</title>
        <authorList>
            <person name="Rohrwild M."/>
            <person name="Coux O."/>
            <person name="Huang H.-C."/>
            <person name="Moerschell R.P."/>
            <person name="Yoo S.J."/>
            <person name="Seol J.H."/>
            <person name="Chung C.H."/>
            <person name="Goldberg A.L."/>
        </authorList>
    </citation>
    <scope>FUNCTION</scope>
    <scope>CATALYTIC ACTIVITY</scope>
    <scope>PROTEIN SEQUENCE OF N-TERMINUS</scope>
</reference>
<reference key="9">
    <citation type="journal article" date="1997" name="Biochem. Biophys. Res. Commun.">
        <title>ATP binding, but not its hydrolysis, is required for assembly and proteolytic activity of the HslVU protease in Escherichia coli.</title>
        <authorList>
            <person name="Yoo S.J."/>
            <person name="Seol J.H."/>
            <person name="Seong I.S."/>
            <person name="Kang M.-S."/>
            <person name="Chung C.H."/>
        </authorList>
    </citation>
    <scope>EFFECTS OF ATP BINDING ON COMPLEX FORMATION</scope>
</reference>
<reference key="10">
    <citation type="journal article" date="1997" name="Electrophoresis">
        <title>Escherichia coli proteome analysis using the gene-protein database.</title>
        <authorList>
            <person name="VanBogelen R.A."/>
            <person name="Abshire K.Z."/>
            <person name="Moldover B."/>
            <person name="Olson E.R."/>
            <person name="Neidhardt F.C."/>
        </authorList>
    </citation>
    <scope>IDENTIFICATION BY 2D-GEL</scope>
</reference>
<reference key="11">
    <citation type="journal article" date="1997" name="Eur. J. Biochem.">
        <title>The heat-shock protein HslVU from Escherichia coli is a protein-activated ATPase as well as an ATP-dependent proteinase.</title>
        <authorList>
            <person name="Seol J.H."/>
            <person name="Yoo S.J."/>
            <person name="Shin D.H."/>
            <person name="Shim Y.K."/>
            <person name="Kang M.-S."/>
            <person name="Goldberg A.L."/>
            <person name="Chung C.H."/>
        </authorList>
    </citation>
    <scope>FUNCTION</scope>
    <scope>CATALYTIC ACTIVITY</scope>
    <scope>SUBSTRATE SPECIFICITY</scope>
</reference>
<reference key="12">
    <citation type="journal article" date="1997" name="J. Bacteriol.">
        <title>Synergistic roles of HslVU and other ATP-dependent proteases in controlling in vivo turnover of sigma32 and abnormal proteins in Escherichia coli.</title>
        <authorList>
            <person name="Kanemori M."/>
            <person name="Nishihara K."/>
            <person name="Yanagi H."/>
            <person name="Yura T."/>
        </authorList>
    </citation>
    <scope>FUNCTION</scope>
    <scope>CATALYTIC ACTIVITY</scope>
</reference>
<reference key="13">
    <citation type="journal article" date="1997" name="FEBS Lett.">
        <title>Mutagenesis of two N-terminal Thr and five Ser residues in HslV, the proteolytic component of the ATP-dependent HslVU protease.</title>
        <authorList>
            <person name="Yoo S.J."/>
            <person name="Shim Y.K."/>
            <person name="Seong I.S."/>
            <person name="Seol J.H."/>
            <person name="Kang M.-S."/>
            <person name="Chung C.H."/>
        </authorList>
    </citation>
    <scope>MUTAGENESIS OF THR-2; THR-3; SER-6; SER-104; SER-125; SER-144 AND SER-173</scope>
    <scope>ACTIVE SITE</scope>
</reference>
<reference key="14">
    <citation type="journal article" date="1998" name="J. Biol. Chem.">
        <title>Effects of the cys mutations on structure and function of the ATP-dependent HslVU protease in Escherichia coli. The Cys287 to Val mutation in HslU uncouples the ATP-dependent proteolysis by HslvU from ATP hydrolysis.</title>
        <authorList>
            <person name="Yoo S.J."/>
            <person name="Kim H.H."/>
            <person name="Shin D.H."/>
            <person name="Lee C.S."/>
            <person name="Seong I.S."/>
            <person name="Seol J.H."/>
            <person name="Shimbara N."/>
            <person name="Tanaka K."/>
            <person name="Chung C.H."/>
        </authorList>
    </citation>
    <scope>MUTAGENESIS OF CYS-160</scope>
</reference>
<reference key="15">
    <citation type="journal article" date="1999" name="FEBS Lett.">
        <title>ATP-dependent degradation of SulA, a cell division inhibitor, by the HslVU protease in Escherichia coli.</title>
        <authorList>
            <person name="Seong I.S."/>
            <person name="Oh J.Y."/>
            <person name="Yoo S.J."/>
            <person name="Seol J.H."/>
            <person name="Chung C.H."/>
        </authorList>
    </citation>
    <scope>FUNCTION</scope>
    <scope>CATALYTIC ACTIVITY</scope>
</reference>
<reference key="16">
    <citation type="journal article" date="1999" name="J. Biol. Chem.">
        <title>Marked instability of the sigma(32) heat shock transcription factor at high temperature. Implications for heat shock regulation.</title>
        <authorList>
            <person name="Kanemori M."/>
            <person name="Yanagi H."/>
            <person name="Yura T."/>
        </authorList>
    </citation>
    <scope>FUNCTION</scope>
    <scope>CATALYTIC ACTIVITY</scope>
    <scope>CHARACTERIZATION</scope>
</reference>
<reference key="17">
    <citation type="journal article" date="2005" name="Nat. Struct. Mol. Biol.">
        <title>Nucleotide-dependent substrate recognition by the AAA+ HslUV protease.</title>
        <authorList>
            <person name="Burton R.E."/>
            <person name="Baker T.A."/>
            <person name="Sauer R.T."/>
        </authorList>
    </citation>
    <scope>FUNCTION</scope>
    <scope>BIOPHYSICOCHEMICAL PROPERTIES</scope>
</reference>
<reference key="18">
    <citation type="journal article" date="2009" name="J. Biol. Chem.">
        <title>HslVU ATP-dependent protease utilizes maximally six among twelve threonine active sites during proteolysis.</title>
        <authorList>
            <person name="Lee J.W."/>
            <person name="Park E."/>
            <person name="Jeong M.S."/>
            <person name="Jeon Y.J."/>
            <person name="Eom S.H."/>
            <person name="Seol J.H."/>
            <person name="Chung C.H."/>
        </authorList>
    </citation>
    <scope>REACTION MECHANISM</scope>
</reference>
<reference key="19">
    <citation type="journal article" date="1997" name="Proc. Natl. Acad. Sci. U.S.A.">
        <title>Crystal structure of heat shock locus V (HslV) from Escherichia coli.</title>
        <authorList>
            <person name="Bochtler M."/>
            <person name="Ditzel L."/>
            <person name="Groll M."/>
            <person name="Huber R."/>
        </authorList>
    </citation>
    <scope>X-RAY CRYSTALLOGRAPHY (3.8 ANGSTROMS)</scope>
    <scope>SUBUNIT</scope>
</reference>
<reference key="20">
    <citation type="journal article" date="2000" name="Nature">
        <title>The structures of HslU and the ATP-dependent protease HslU-HslV.</title>
        <authorList>
            <person name="Bochtler M."/>
            <person name="Hartmann C."/>
            <person name="Song H.K."/>
            <person name="Bourenkov G.P."/>
            <person name="Bartunik H.D."/>
            <person name="Huber R."/>
        </authorList>
    </citation>
    <scope>X-RAY CRYSTALLOGRAPHY (2.81 ANGSTROMS) OF COMPLEXES WITH HSLU AND ATP ANALOG</scope>
</reference>
<reference key="21">
    <citation type="journal article" date="2000" name="Proc. Natl. Acad. Sci. U.S.A.">
        <title>Mutational studies on HslU and its docking mode with HslV.</title>
        <authorList>
            <person name="Song H.K."/>
            <person name="Hartmann C."/>
            <person name="Ramachandran R."/>
            <person name="Bochtler M."/>
            <person name="Behrendt R."/>
            <person name="Moroder L."/>
            <person name="Huber R."/>
        </authorList>
    </citation>
    <scope>X-RAY CRYSTALLOGRAPHY (2.8 ANGSTROMS) OF 2-176</scope>
</reference>
<reference key="22">
    <citation type="journal article" date="2001" name="Structure">
        <title>Crystal structures of the HslVU peptidase-ATPase complex reveal an ATP-dependent proteolysis mechanism.</title>
        <authorList>
            <person name="Wang J."/>
            <person name="Song J.J."/>
            <person name="Franklin M.C."/>
            <person name="Kamtekar S."/>
            <person name="Im Y.J."/>
            <person name="Rho S.H."/>
            <person name="Seong I.S."/>
            <person name="Lee C.S."/>
            <person name="Chung C.H."/>
            <person name="Eom S.H."/>
        </authorList>
    </citation>
    <scope>X-RAY CRYSTALLOGRAPHY (3.0 ANGSTROMS) OF 2-175</scope>
</reference>
<reference key="23">
    <citation type="journal article" date="2001" name="Structure">
        <title>Nucleotide-dependent conformational changes in a protease-associated ATPase HslU.</title>
        <authorList>
            <person name="Wang J."/>
            <person name="Song J.J."/>
            <person name="Seong I.S."/>
            <person name="Franklin M.C."/>
            <person name="Kamtekar S."/>
            <person name="Eom S.H."/>
            <person name="Chung C.H."/>
        </authorList>
    </citation>
    <scope>X-RAY CRYSTALLOGRAPHY (2.8 ANGSTROMS) OF 2-176</scope>
</reference>
<sequence length="176" mass="19093">MTTIVSVRRNGHVVIAGDGQATLGNTVMKGNVKKVRRLYNDKVIAGFAGGTADAFTLFELFERKLEMHQGHLVKAAVELAKDWRTDRMLRKLEALLAVADETASLIITGNGDVVQPENDLIAIGSGGPYAQAAARALLENTELSAREIAEKALDIAGDICIYTNHFHTIEELSYKA</sequence>